<gene>
    <name evidence="1" type="primary">tmcAL</name>
    <name type="ordered locus">Bsph_1417</name>
</gene>
<organism>
    <name type="scientific">Lysinibacillus sphaericus (strain C3-41)</name>
    <dbReference type="NCBI Taxonomy" id="444177"/>
    <lineage>
        <taxon>Bacteria</taxon>
        <taxon>Bacillati</taxon>
        <taxon>Bacillota</taxon>
        <taxon>Bacilli</taxon>
        <taxon>Bacillales</taxon>
        <taxon>Bacillaceae</taxon>
        <taxon>Lysinibacillus</taxon>
    </lineage>
</organism>
<dbReference type="EC" id="6.3.4.-" evidence="1"/>
<dbReference type="EMBL" id="CP000817">
    <property type="protein sequence ID" value="ACA39023.1"/>
    <property type="molecule type" value="Genomic_DNA"/>
</dbReference>
<dbReference type="RefSeq" id="WP_012293144.1">
    <property type="nucleotide sequence ID" value="NC_010382.1"/>
</dbReference>
<dbReference type="SMR" id="B1HPX1"/>
<dbReference type="EnsemblBacteria" id="ACA39023">
    <property type="protein sequence ID" value="ACA39023"/>
    <property type="gene ID" value="Bsph_1417"/>
</dbReference>
<dbReference type="KEGG" id="lsp:Bsph_1417"/>
<dbReference type="HOGENOM" id="CLU_038915_0_2_9"/>
<dbReference type="Proteomes" id="UP000002164">
    <property type="component" value="Chromosome"/>
</dbReference>
<dbReference type="GO" id="GO:0005737">
    <property type="term" value="C:cytoplasm"/>
    <property type="evidence" value="ECO:0007669"/>
    <property type="project" value="UniProtKB-SubCell"/>
</dbReference>
<dbReference type="GO" id="GO:0005524">
    <property type="term" value="F:ATP binding"/>
    <property type="evidence" value="ECO:0007669"/>
    <property type="project" value="UniProtKB-KW"/>
</dbReference>
<dbReference type="GO" id="GO:0016879">
    <property type="term" value="F:ligase activity, forming carbon-nitrogen bonds"/>
    <property type="evidence" value="ECO:0007669"/>
    <property type="project" value="UniProtKB-UniRule"/>
</dbReference>
<dbReference type="GO" id="GO:0000049">
    <property type="term" value="F:tRNA binding"/>
    <property type="evidence" value="ECO:0007669"/>
    <property type="project" value="UniProtKB-KW"/>
</dbReference>
<dbReference type="GO" id="GO:0006400">
    <property type="term" value="P:tRNA modification"/>
    <property type="evidence" value="ECO:0007669"/>
    <property type="project" value="UniProtKB-UniRule"/>
</dbReference>
<dbReference type="Gene3D" id="3.40.50.620">
    <property type="entry name" value="HUPs"/>
    <property type="match status" value="1"/>
</dbReference>
<dbReference type="HAMAP" id="MF_01539">
    <property type="entry name" value="TmcAL"/>
    <property type="match status" value="1"/>
</dbReference>
<dbReference type="InterPro" id="IPR014729">
    <property type="entry name" value="Rossmann-like_a/b/a_fold"/>
</dbReference>
<dbReference type="InterPro" id="IPR008513">
    <property type="entry name" value="tRNA(Met)_cyd_acetate_ligase"/>
</dbReference>
<dbReference type="NCBIfam" id="NF010191">
    <property type="entry name" value="PRK13670.1"/>
    <property type="match status" value="1"/>
</dbReference>
<dbReference type="PANTHER" id="PTHR37825">
    <property type="entry name" value="TRNA(MET) CYTIDINE ACETATE LIGASE"/>
    <property type="match status" value="1"/>
</dbReference>
<dbReference type="PANTHER" id="PTHR37825:SF1">
    <property type="entry name" value="TRNA(MET) CYTIDINE ACETATE LIGASE"/>
    <property type="match status" value="1"/>
</dbReference>
<dbReference type="Pfam" id="PF05636">
    <property type="entry name" value="HIGH_NTase1"/>
    <property type="match status" value="1"/>
</dbReference>
<dbReference type="SUPFAM" id="SSF52374">
    <property type="entry name" value="Nucleotidylyl transferase"/>
    <property type="match status" value="1"/>
</dbReference>
<keyword id="KW-0067">ATP-binding</keyword>
<keyword id="KW-0963">Cytoplasm</keyword>
<keyword id="KW-0436">Ligase</keyword>
<keyword id="KW-0547">Nucleotide-binding</keyword>
<keyword id="KW-0694">RNA-binding</keyword>
<keyword id="KW-0819">tRNA processing</keyword>
<keyword id="KW-0820">tRNA-binding</keyword>
<reference key="1">
    <citation type="journal article" date="2008" name="J. Bacteriol.">
        <title>Complete genome sequence of the mosquitocidal bacterium Bacillus sphaericus C3-41 and comparison with those of closely related Bacillus species.</title>
        <authorList>
            <person name="Hu X."/>
            <person name="Fan W."/>
            <person name="Han B."/>
            <person name="Liu H."/>
            <person name="Zheng D."/>
            <person name="Li Q."/>
            <person name="Dong W."/>
            <person name="Yan J."/>
            <person name="Gao M."/>
            <person name="Berry C."/>
            <person name="Yuan Z."/>
        </authorList>
    </citation>
    <scope>NUCLEOTIDE SEQUENCE [LARGE SCALE GENOMIC DNA]</scope>
    <source>
        <strain>C3-41</strain>
    </source>
</reference>
<evidence type="ECO:0000255" key="1">
    <source>
        <dbReference type="HAMAP-Rule" id="MF_01539"/>
    </source>
</evidence>
<feature type="chain" id="PRO_1000198858" description="tRNA(Met) cytidine acetate ligase">
    <location>
        <begin position="1"/>
        <end position="403"/>
    </location>
</feature>
<feature type="binding site" evidence="1">
    <location>
        <begin position="7"/>
        <end position="20"/>
    </location>
    <ligand>
        <name>ATP</name>
        <dbReference type="ChEBI" id="CHEBI:30616"/>
    </ligand>
</feature>
<feature type="binding site" evidence="1">
    <location>
        <position position="101"/>
    </location>
    <ligand>
        <name>ATP</name>
        <dbReference type="ChEBI" id="CHEBI:30616"/>
    </ligand>
</feature>
<feature type="binding site" evidence="1">
    <location>
        <position position="164"/>
    </location>
    <ligand>
        <name>ATP</name>
        <dbReference type="ChEBI" id="CHEBI:30616"/>
    </ligand>
</feature>
<feature type="binding site" evidence="1">
    <location>
        <begin position="189"/>
        <end position="190"/>
    </location>
    <ligand>
        <name>ATP</name>
        <dbReference type="ChEBI" id="CHEBI:30616"/>
    </ligand>
</feature>
<accession>B1HPX1</accession>
<comment type="function">
    <text evidence="1">Catalyzes the formation of N(4)-acetylcytidine (ac(4)C) at the wobble position of elongator tRNA(Met), using acetate and ATP as substrates. First activates an acetate ion to form acetyladenylate (Ac-AMP) and then transfers the acetyl group to tRNA to form ac(4)C34.</text>
</comment>
<comment type="catalytic activity">
    <reaction evidence="1">
        <text>cytidine(34) in elongator tRNA(Met) + acetate + ATP = N(4)-acetylcytidine(34) in elongator tRNA(Met) + AMP + diphosphate</text>
        <dbReference type="Rhea" id="RHEA:58144"/>
        <dbReference type="Rhea" id="RHEA-COMP:10693"/>
        <dbReference type="Rhea" id="RHEA-COMP:10694"/>
        <dbReference type="ChEBI" id="CHEBI:30089"/>
        <dbReference type="ChEBI" id="CHEBI:30616"/>
        <dbReference type="ChEBI" id="CHEBI:33019"/>
        <dbReference type="ChEBI" id="CHEBI:74900"/>
        <dbReference type="ChEBI" id="CHEBI:82748"/>
        <dbReference type="ChEBI" id="CHEBI:456215"/>
    </reaction>
</comment>
<comment type="subcellular location">
    <subcellularLocation>
        <location evidence="1">Cytoplasm</location>
    </subcellularLocation>
</comment>
<comment type="similarity">
    <text evidence="1">Belongs to the TmcAL family.</text>
</comment>
<proteinExistence type="inferred from homology"/>
<name>TMCAL_LYSSC</name>
<protein>
    <recommendedName>
        <fullName evidence="1">tRNA(Met) cytidine acetate ligase</fullName>
        <ecNumber evidence="1">6.3.4.-</ecNumber>
    </recommendedName>
</protein>
<sequence length="403" mass="45012">MKAVGIVVEYNPFHNGHAYHLTQAKKVAKADIVIAVMSGTFLQRGEPAMVDKWTRTKMALAGGVDIVIELPYVYSTAPATDFAKGAISILTAVGCDSFAFGSEDGSIQPFLNTYDLIDNNRTEYDALIKDSLKTGASYPKSLYYAYEQLTQKFPAPYIDLAQPNNILGFHYLEAARTLDSNIKPLTIPRIAAGYHDALKQDSSIASATGIRKALASTSSLQSVQKVVPETSFDYLTDWHRHYKKFASWESFWPLLQFTIMRHTPSELTRYAEVTEGIENAIMKAAKNSSSFNSFMEKIKSKRYTWTRIQRMITHIYTGFTKEQLQSFEAPSFIRLLGMSAKGQAYLGKRKKDIELPLISRVAAANDAMLAIDIHAAELYNLSIEQGVTAQSLPKDYQTPPIRN</sequence>